<organism>
    <name type="scientific">Salmonella enteritidis PT4 (strain P125109)</name>
    <dbReference type="NCBI Taxonomy" id="550537"/>
    <lineage>
        <taxon>Bacteria</taxon>
        <taxon>Pseudomonadati</taxon>
        <taxon>Pseudomonadota</taxon>
        <taxon>Gammaproteobacteria</taxon>
        <taxon>Enterobacterales</taxon>
        <taxon>Enterobacteriaceae</taxon>
        <taxon>Salmonella</taxon>
    </lineage>
</organism>
<proteinExistence type="inferred from homology"/>
<evidence type="ECO:0000255" key="1">
    <source>
        <dbReference type="HAMAP-Rule" id="MF_01381"/>
    </source>
</evidence>
<accession>B5R2X1</accession>
<gene>
    <name evidence="1" type="primary">emtA</name>
    <name type="ordered locus">SEN1238</name>
</gene>
<protein>
    <recommendedName>
        <fullName evidence="1">Endo-type membrane-bound lytic murein transglycosylase A</fullName>
        <ecNumber evidence="1">4.2.2.n2</ecNumber>
    </recommendedName>
    <alternativeName>
        <fullName evidence="1">Peptidoglycan lytic endotransglycosylase</fullName>
    </alternativeName>
</protein>
<sequence>MKLRWFAFLVVILAGCSSKQDYRNPPWNAEVPVKRAMQWMPISEKAGAAWGVDPHLITAIIAIESGGNPNAVSKSNAIGLMQLKASTSGRDVYRRMGWRGEPTTSELKNPERNISMGAAYLSILENGPLAGIKDPQVMQYALVVSYANGAGALLRTFSSDRKKAIEKINDLDADEFFEHVVDNHPAPQAPRYIWKLQQALDAM</sequence>
<comment type="function">
    <text evidence="1">Murein-degrading enzyme. May play a role in recycling of muropeptides during cell elongation and/or cell division. Preferentially cleaves at a distance of more than two disaccharide units from the ends of the glycan chain.</text>
</comment>
<comment type="catalytic activity">
    <reaction evidence="1">
        <text>Endolytic cleavage of the (1-&gt;4)-beta-glycosidic linkage between N-acetylmuramic acid (MurNAc) and N-acetylglucosamine (GlcNAc) residues in peptidoglycan with concomitant formation of a 1,6-anhydrobond in the MurNAc residue.</text>
        <dbReference type="EC" id="4.2.2.n2"/>
    </reaction>
</comment>
<comment type="subcellular location">
    <subcellularLocation>
        <location evidence="1">Cell outer membrane</location>
        <topology evidence="1">Lipid-anchor</topology>
    </subcellularLocation>
</comment>
<comment type="similarity">
    <text evidence="1">Belongs to the transglycosylase Slt family.</text>
</comment>
<feature type="signal peptide" evidence="1">
    <location>
        <begin position="1"/>
        <end position="15"/>
    </location>
</feature>
<feature type="chain" id="PRO_1000144958" description="Endo-type membrane-bound lytic murein transglycosylase A">
    <location>
        <begin position="16"/>
        <end position="203"/>
    </location>
</feature>
<feature type="lipid moiety-binding region" description="N-palmitoyl cysteine" evidence="1">
    <location>
        <position position="16"/>
    </location>
</feature>
<feature type="lipid moiety-binding region" description="S-diacylglycerol cysteine" evidence="1">
    <location>
        <position position="16"/>
    </location>
</feature>
<reference key="1">
    <citation type="journal article" date="2008" name="Genome Res.">
        <title>Comparative genome analysis of Salmonella enteritidis PT4 and Salmonella gallinarum 287/91 provides insights into evolutionary and host adaptation pathways.</title>
        <authorList>
            <person name="Thomson N.R."/>
            <person name="Clayton D.J."/>
            <person name="Windhorst D."/>
            <person name="Vernikos G."/>
            <person name="Davidson S."/>
            <person name="Churcher C."/>
            <person name="Quail M.A."/>
            <person name="Stevens M."/>
            <person name="Jones M.A."/>
            <person name="Watson M."/>
            <person name="Barron A."/>
            <person name="Layton A."/>
            <person name="Pickard D."/>
            <person name="Kingsley R.A."/>
            <person name="Bignell A."/>
            <person name="Clark L."/>
            <person name="Harris B."/>
            <person name="Ormond D."/>
            <person name="Abdellah Z."/>
            <person name="Brooks K."/>
            <person name="Cherevach I."/>
            <person name="Chillingworth T."/>
            <person name="Woodward J."/>
            <person name="Norberczak H."/>
            <person name="Lord A."/>
            <person name="Arrowsmith C."/>
            <person name="Jagels K."/>
            <person name="Moule S."/>
            <person name="Mungall K."/>
            <person name="Saunders M."/>
            <person name="Whitehead S."/>
            <person name="Chabalgoity J.A."/>
            <person name="Maskell D."/>
            <person name="Humphreys T."/>
            <person name="Roberts M."/>
            <person name="Barrow P.A."/>
            <person name="Dougan G."/>
            <person name="Parkhill J."/>
        </authorList>
    </citation>
    <scope>NUCLEOTIDE SEQUENCE [LARGE SCALE GENOMIC DNA]</scope>
    <source>
        <strain>P125109</strain>
    </source>
</reference>
<dbReference type="EC" id="4.2.2.n2" evidence="1"/>
<dbReference type="EMBL" id="AM933172">
    <property type="protein sequence ID" value="CAR32818.1"/>
    <property type="molecule type" value="Genomic_DNA"/>
</dbReference>
<dbReference type="RefSeq" id="WP_000776974.1">
    <property type="nucleotide sequence ID" value="NC_011294.1"/>
</dbReference>
<dbReference type="SMR" id="B5R2X1"/>
<dbReference type="CAZy" id="GH23">
    <property type="family name" value="Glycoside Hydrolase Family 23"/>
</dbReference>
<dbReference type="KEGG" id="set:SEN1238"/>
<dbReference type="HOGENOM" id="CLU_103257_0_0_6"/>
<dbReference type="Proteomes" id="UP000000613">
    <property type="component" value="Chromosome"/>
</dbReference>
<dbReference type="GO" id="GO:0009279">
    <property type="term" value="C:cell outer membrane"/>
    <property type="evidence" value="ECO:0007669"/>
    <property type="project" value="UniProtKB-SubCell"/>
</dbReference>
<dbReference type="GO" id="GO:0008932">
    <property type="term" value="F:lytic endotransglycosylase activity"/>
    <property type="evidence" value="ECO:0007669"/>
    <property type="project" value="InterPro"/>
</dbReference>
<dbReference type="GO" id="GO:0016998">
    <property type="term" value="P:cell wall macromolecule catabolic process"/>
    <property type="evidence" value="ECO:0007669"/>
    <property type="project" value="UniProtKB-UniRule"/>
</dbReference>
<dbReference type="GO" id="GO:0071555">
    <property type="term" value="P:cell wall organization"/>
    <property type="evidence" value="ECO:0007669"/>
    <property type="project" value="UniProtKB-KW"/>
</dbReference>
<dbReference type="GO" id="GO:0000270">
    <property type="term" value="P:peptidoglycan metabolic process"/>
    <property type="evidence" value="ECO:0007669"/>
    <property type="project" value="InterPro"/>
</dbReference>
<dbReference type="CDD" id="cd16893">
    <property type="entry name" value="LT_MltC_MltE"/>
    <property type="match status" value="1"/>
</dbReference>
<dbReference type="Gene3D" id="1.10.530.10">
    <property type="match status" value="1"/>
</dbReference>
<dbReference type="HAMAP" id="MF_01381">
    <property type="entry name" value="EmtA"/>
    <property type="match status" value="1"/>
</dbReference>
<dbReference type="InterPro" id="IPR023946">
    <property type="entry name" value="EmtA"/>
</dbReference>
<dbReference type="InterPro" id="IPR023346">
    <property type="entry name" value="Lysozyme-like_dom_sf"/>
</dbReference>
<dbReference type="InterPro" id="IPR000189">
    <property type="entry name" value="Transglyc_AS"/>
</dbReference>
<dbReference type="InterPro" id="IPR008258">
    <property type="entry name" value="Transglycosylase_SLT_dom_1"/>
</dbReference>
<dbReference type="NCBIfam" id="NF012014">
    <property type="entry name" value="PRK15470.1"/>
    <property type="match status" value="1"/>
</dbReference>
<dbReference type="PANTHER" id="PTHR37423:SF4">
    <property type="entry name" value="ENDO-TYPE MEMBRANE-BOUND LYTIC MUREIN TRANSGLYCOSYLASE A"/>
    <property type="match status" value="1"/>
</dbReference>
<dbReference type="PANTHER" id="PTHR37423">
    <property type="entry name" value="SOLUBLE LYTIC MUREIN TRANSGLYCOSYLASE-RELATED"/>
    <property type="match status" value="1"/>
</dbReference>
<dbReference type="Pfam" id="PF01464">
    <property type="entry name" value="SLT"/>
    <property type="match status" value="1"/>
</dbReference>
<dbReference type="SUPFAM" id="SSF53955">
    <property type="entry name" value="Lysozyme-like"/>
    <property type="match status" value="1"/>
</dbReference>
<dbReference type="PROSITE" id="PS51257">
    <property type="entry name" value="PROKAR_LIPOPROTEIN"/>
    <property type="match status" value="1"/>
</dbReference>
<dbReference type="PROSITE" id="PS00922">
    <property type="entry name" value="TRANSGLYCOSYLASE"/>
    <property type="match status" value="1"/>
</dbReference>
<keyword id="KW-0998">Cell outer membrane</keyword>
<keyword id="KW-0961">Cell wall biogenesis/degradation</keyword>
<keyword id="KW-0449">Lipoprotein</keyword>
<keyword id="KW-0456">Lyase</keyword>
<keyword id="KW-0472">Membrane</keyword>
<keyword id="KW-0564">Palmitate</keyword>
<keyword id="KW-0732">Signal</keyword>
<name>EMTA_SALEP</name>